<gene>
    <name type="primary">BLI1</name>
    <name type="ORF">AWRI796_2899</name>
</gene>
<evidence type="ECO:0000250" key="1"/>
<evidence type="ECO:0000255" key="2"/>
<evidence type="ECO:0000305" key="3"/>
<dbReference type="EMBL" id="ADVS01000035">
    <property type="protein sequence ID" value="EGA74183.1"/>
    <property type="molecule type" value="Genomic_DNA"/>
</dbReference>
<dbReference type="HOGENOM" id="CLU_2127121_0_0_1"/>
<dbReference type="OMA" id="AVANHEW"/>
<dbReference type="OrthoDB" id="4059150at2759"/>
<dbReference type="GO" id="GO:0005768">
    <property type="term" value="C:endosome"/>
    <property type="evidence" value="ECO:0007669"/>
    <property type="project" value="UniProtKB-SubCell"/>
</dbReference>
<dbReference type="InterPro" id="IPR020491">
    <property type="entry name" value="BLI1"/>
</dbReference>
<dbReference type="Pfam" id="PF17324">
    <property type="entry name" value="BLI1"/>
    <property type="match status" value="1"/>
</dbReference>
<accession>E7KEX7</accession>
<protein>
    <recommendedName>
        <fullName>Biogenesis of lysosome-related organelles complex 1 subunit BLI1</fullName>
        <shortName>BLOC-1 subunit BLI1</shortName>
    </recommendedName>
    <alternativeName>
        <fullName>BLOC-1 interactor 1</fullName>
    </alternativeName>
</protein>
<feature type="chain" id="PRO_0000410621" description="Biogenesis of lysosome-related organelles complex 1 subunit BLI1">
    <location>
        <begin position="1"/>
        <end position="113"/>
    </location>
</feature>
<feature type="coiled-coil region" evidence="2">
    <location>
        <begin position="57"/>
        <end position="97"/>
    </location>
</feature>
<organism>
    <name type="scientific">Saccharomyces cerevisiae (strain AWRI796)</name>
    <name type="common">Baker's yeast</name>
    <dbReference type="NCBI Taxonomy" id="764097"/>
    <lineage>
        <taxon>Eukaryota</taxon>
        <taxon>Fungi</taxon>
        <taxon>Dikarya</taxon>
        <taxon>Ascomycota</taxon>
        <taxon>Saccharomycotina</taxon>
        <taxon>Saccharomycetes</taxon>
        <taxon>Saccharomycetales</taxon>
        <taxon>Saccharomycetaceae</taxon>
        <taxon>Saccharomyces</taxon>
    </lineage>
</organism>
<proteinExistence type="inferred from homology"/>
<keyword id="KW-0175">Coiled coil</keyword>
<keyword id="KW-0967">Endosome</keyword>
<keyword id="KW-0813">Transport</keyword>
<comment type="function">
    <text evidence="1">Component of the biogenesis of lysosome-related organelles complex-1 (BLOC-1) involved in endosomal cargo sorting.</text>
</comment>
<comment type="subunit">
    <text evidence="1">Component of the biogenesis of lysosome-related organelles complex-1 (BLOC-1) composed of at least BLI1, BLS1, CNL1, KXD1, SNN1 and VAB2.</text>
</comment>
<comment type="subcellular location">
    <subcellularLocation>
        <location evidence="1">Endosome</location>
    </subcellularLocation>
</comment>
<comment type="similarity">
    <text evidence="3">Belongs to the BLI1 family.</text>
</comment>
<reference key="1">
    <citation type="journal article" date="2011" name="PLoS Genet.">
        <title>Whole-genome comparison reveals novel genetic elements that characterize the genome of industrial strains of Saccharomyces cerevisiae.</title>
        <authorList>
            <person name="Borneman A.R."/>
            <person name="Desany B.A."/>
            <person name="Riches D."/>
            <person name="Affourtit J.P."/>
            <person name="Forgan A.H."/>
            <person name="Pretorius I.S."/>
            <person name="Egholm M."/>
            <person name="Chambers P.J."/>
        </authorList>
    </citation>
    <scope>NUCLEOTIDE SEQUENCE [LARGE SCALE GENOMIC DNA]</scope>
    <source>
        <strain>AWRI796</strain>
    </source>
</reference>
<name>BLI1_YEASA</name>
<sequence>MGEQNKLYYDVEKLVNSLQESFDLDCAQSVSLFTSKSRSNEAWLEELENKFKLKDDVELDDVENLRAEIDMKLNMLEDKVSYYERLYKELEEFQNEIKIKTVVNNRRQSRTPK</sequence>